<organism>
    <name type="scientific">Escherichia coli O157:H7 (strain EC4115 / EHEC)</name>
    <dbReference type="NCBI Taxonomy" id="444450"/>
    <lineage>
        <taxon>Bacteria</taxon>
        <taxon>Pseudomonadati</taxon>
        <taxon>Pseudomonadota</taxon>
        <taxon>Gammaproteobacteria</taxon>
        <taxon>Enterobacterales</taxon>
        <taxon>Enterobacteriaceae</taxon>
        <taxon>Escherichia</taxon>
    </lineage>
</organism>
<evidence type="ECO:0000255" key="1">
    <source>
        <dbReference type="HAMAP-Rule" id="MF_00172"/>
    </source>
</evidence>
<sequence>MTILNHTLGFPRVGLRRELKKAQESYWAGNSTREELLAVGRELRARHWDQQKQAGIDLLPVGDFAWYDHVLTTSLLLGNVPARHQNKDGSVDIDTLFRIGRGRAPTGEPAAAAEMTKWFNTNYHYMVPEFVKGQQFKLTWTQLLDEVDEALALGHKVKPVLLGPITWLWLGKVKGEQFDRLSLLNDILPVYQQVLAELAKRGIEWVQIDEPALVLELPQAWLDAYKPAYDALQGQVKLLLTTYFEGVTPNLDTITALPVQGLHVDLVHGKDDVVELHKRLPSDWLLSAGLINGRNVWRADLTEKYVQIKDIVGKRDLWVASSCSLLHSPIDLSVETRLDAEVKSWFAFALQKCHELALLRDALNSGDTAALAEWSAPIQARRHSTRVHNPAVEKRLAAITAQDSQRANVYEVRAEAQRARFKLPAWPTTTIGSFPQTTEIRTLRLDFKKGNLDANNYRTGIAEHIRQAIVEQERLGLDVLVHGEAERNDMVEYFGEHLDGFVFTQNGWVQSYGSRCVKPPIVIGDVSRPAPITVEWAKYAQSMTDKPVKGMLTGPVTILCWSFPREDVSRETIAKQIALALRDEVADLEAAGIGIIQIDEPALREGLPLRRSDWDAYLQWGVEAFRINAAVAKDDTQIHTHMCYCEFNDIMDSIAALDADVITIETSRSDMELLESFEEFDYPNEIGPGVYDIHSPNVPSVEWIEALLKKAAKRIPAERLWVNPDCGLKTRGWPETRAALANMVQAAQNLRRG</sequence>
<dbReference type="EC" id="2.1.1.14" evidence="1"/>
<dbReference type="EMBL" id="CP001164">
    <property type="protein sequence ID" value="ACI36187.1"/>
    <property type="molecule type" value="Genomic_DNA"/>
</dbReference>
<dbReference type="RefSeq" id="WP_000153906.1">
    <property type="nucleotide sequence ID" value="NC_011353.1"/>
</dbReference>
<dbReference type="SMR" id="B5YY78"/>
<dbReference type="KEGG" id="ecf:ECH74115_5270"/>
<dbReference type="HOGENOM" id="CLU_013175_0_0_6"/>
<dbReference type="UniPathway" id="UPA00051">
    <property type="reaction ID" value="UER00082"/>
</dbReference>
<dbReference type="GO" id="GO:0003871">
    <property type="term" value="F:5-methyltetrahydropteroyltriglutamate-homocysteine S-methyltransferase activity"/>
    <property type="evidence" value="ECO:0007669"/>
    <property type="project" value="UniProtKB-UniRule"/>
</dbReference>
<dbReference type="GO" id="GO:0008270">
    <property type="term" value="F:zinc ion binding"/>
    <property type="evidence" value="ECO:0007669"/>
    <property type="project" value="InterPro"/>
</dbReference>
<dbReference type="GO" id="GO:0009086">
    <property type="term" value="P:methionine biosynthetic process"/>
    <property type="evidence" value="ECO:0007669"/>
    <property type="project" value="UniProtKB-UniRule"/>
</dbReference>
<dbReference type="GO" id="GO:0032259">
    <property type="term" value="P:methylation"/>
    <property type="evidence" value="ECO:0007669"/>
    <property type="project" value="UniProtKB-KW"/>
</dbReference>
<dbReference type="CDD" id="cd03311">
    <property type="entry name" value="CIMS_C_terminal_like"/>
    <property type="match status" value="1"/>
</dbReference>
<dbReference type="CDD" id="cd03312">
    <property type="entry name" value="CIMS_N_terminal_like"/>
    <property type="match status" value="1"/>
</dbReference>
<dbReference type="FunFam" id="3.20.20.210:FF:000002">
    <property type="entry name" value="5-methyltetrahydropteroyltriglutamate--homocysteine methyltransferase"/>
    <property type="match status" value="1"/>
</dbReference>
<dbReference type="FunFam" id="3.20.20.210:FF:000003">
    <property type="entry name" value="5-methyltetrahydropteroyltriglutamate--homocysteine methyltransferase"/>
    <property type="match status" value="1"/>
</dbReference>
<dbReference type="Gene3D" id="3.20.20.210">
    <property type="match status" value="2"/>
</dbReference>
<dbReference type="HAMAP" id="MF_00172">
    <property type="entry name" value="Meth_synth"/>
    <property type="match status" value="1"/>
</dbReference>
<dbReference type="InterPro" id="IPR013215">
    <property type="entry name" value="Cbl-indep_Met_Synth_N"/>
</dbReference>
<dbReference type="InterPro" id="IPR006276">
    <property type="entry name" value="Cobalamin-indep_Met_synthase"/>
</dbReference>
<dbReference type="InterPro" id="IPR002629">
    <property type="entry name" value="Met_Synth_C/arc"/>
</dbReference>
<dbReference type="InterPro" id="IPR038071">
    <property type="entry name" value="UROD/MetE-like_sf"/>
</dbReference>
<dbReference type="NCBIfam" id="TIGR01371">
    <property type="entry name" value="met_syn_B12ind"/>
    <property type="match status" value="1"/>
</dbReference>
<dbReference type="NCBIfam" id="NF003556">
    <property type="entry name" value="PRK05222.1"/>
    <property type="match status" value="1"/>
</dbReference>
<dbReference type="PANTHER" id="PTHR30519">
    <property type="entry name" value="5-METHYLTETRAHYDROPTEROYLTRIGLUTAMATE--HOMOCYSTEINE METHYLTRANSFERASE"/>
    <property type="match status" value="1"/>
</dbReference>
<dbReference type="Pfam" id="PF08267">
    <property type="entry name" value="Meth_synt_1"/>
    <property type="match status" value="1"/>
</dbReference>
<dbReference type="Pfam" id="PF01717">
    <property type="entry name" value="Meth_synt_2"/>
    <property type="match status" value="1"/>
</dbReference>
<dbReference type="PIRSF" id="PIRSF000382">
    <property type="entry name" value="MeTrfase_B12_ind"/>
    <property type="match status" value="1"/>
</dbReference>
<dbReference type="SUPFAM" id="SSF51726">
    <property type="entry name" value="UROD/MetE-like"/>
    <property type="match status" value="2"/>
</dbReference>
<feature type="chain" id="PRO_1000097825" description="5-methyltetrahydropteroyltriglutamate--homocysteine methyltransferase">
    <location>
        <begin position="1"/>
        <end position="753"/>
    </location>
</feature>
<feature type="active site" description="Proton donor" evidence="1">
    <location>
        <position position="694"/>
    </location>
</feature>
<feature type="binding site" evidence="1">
    <location>
        <begin position="17"/>
        <end position="20"/>
    </location>
    <ligand>
        <name>5-methyltetrahydropteroyltri-L-glutamate</name>
        <dbReference type="ChEBI" id="CHEBI:58207"/>
    </ligand>
</feature>
<feature type="binding site" evidence="1">
    <location>
        <position position="117"/>
    </location>
    <ligand>
        <name>5-methyltetrahydropteroyltri-L-glutamate</name>
        <dbReference type="ChEBI" id="CHEBI:58207"/>
    </ligand>
</feature>
<feature type="binding site" evidence="1">
    <location>
        <begin position="431"/>
        <end position="433"/>
    </location>
    <ligand>
        <name>L-homocysteine</name>
        <dbReference type="ChEBI" id="CHEBI:58199"/>
    </ligand>
</feature>
<feature type="binding site" evidence="1">
    <location>
        <begin position="431"/>
        <end position="433"/>
    </location>
    <ligand>
        <name>L-methionine</name>
        <dbReference type="ChEBI" id="CHEBI:57844"/>
    </ligand>
</feature>
<feature type="binding site" evidence="1">
    <location>
        <position position="484"/>
    </location>
    <ligand>
        <name>L-homocysteine</name>
        <dbReference type="ChEBI" id="CHEBI:58199"/>
    </ligand>
</feature>
<feature type="binding site" evidence="1">
    <location>
        <position position="484"/>
    </location>
    <ligand>
        <name>L-methionine</name>
        <dbReference type="ChEBI" id="CHEBI:57844"/>
    </ligand>
</feature>
<feature type="binding site" evidence="1">
    <location>
        <begin position="515"/>
        <end position="516"/>
    </location>
    <ligand>
        <name>5-methyltetrahydropteroyltri-L-glutamate</name>
        <dbReference type="ChEBI" id="CHEBI:58207"/>
    </ligand>
</feature>
<feature type="binding site" evidence="1">
    <location>
        <position position="561"/>
    </location>
    <ligand>
        <name>5-methyltetrahydropteroyltri-L-glutamate</name>
        <dbReference type="ChEBI" id="CHEBI:58207"/>
    </ligand>
</feature>
<feature type="binding site" evidence="1">
    <location>
        <position position="599"/>
    </location>
    <ligand>
        <name>L-homocysteine</name>
        <dbReference type="ChEBI" id="CHEBI:58199"/>
    </ligand>
</feature>
<feature type="binding site" evidence="1">
    <location>
        <position position="599"/>
    </location>
    <ligand>
        <name>L-methionine</name>
        <dbReference type="ChEBI" id="CHEBI:57844"/>
    </ligand>
</feature>
<feature type="binding site" evidence="1">
    <location>
        <position position="605"/>
    </location>
    <ligand>
        <name>5-methyltetrahydropteroyltri-L-glutamate</name>
        <dbReference type="ChEBI" id="CHEBI:58207"/>
    </ligand>
</feature>
<feature type="binding site" evidence="1">
    <location>
        <position position="641"/>
    </location>
    <ligand>
        <name>Zn(2+)</name>
        <dbReference type="ChEBI" id="CHEBI:29105"/>
        <note>catalytic</note>
    </ligand>
</feature>
<feature type="binding site" evidence="1">
    <location>
        <position position="643"/>
    </location>
    <ligand>
        <name>Zn(2+)</name>
        <dbReference type="ChEBI" id="CHEBI:29105"/>
        <note>catalytic</note>
    </ligand>
</feature>
<feature type="binding site" evidence="1">
    <location>
        <position position="665"/>
    </location>
    <ligand>
        <name>Zn(2+)</name>
        <dbReference type="ChEBI" id="CHEBI:29105"/>
        <note>catalytic</note>
    </ligand>
</feature>
<feature type="binding site" evidence="1">
    <location>
        <position position="726"/>
    </location>
    <ligand>
        <name>Zn(2+)</name>
        <dbReference type="ChEBI" id="CHEBI:29105"/>
        <note>catalytic</note>
    </ligand>
</feature>
<protein>
    <recommendedName>
        <fullName evidence="1">5-methyltetrahydropteroyltriglutamate--homocysteine methyltransferase</fullName>
        <ecNumber evidence="1">2.1.1.14</ecNumber>
    </recommendedName>
    <alternativeName>
        <fullName evidence="1">Cobalamin-independent methionine synthase</fullName>
    </alternativeName>
    <alternativeName>
        <fullName evidence="1">Methionine synthase, vitamin-B12 independent isozyme</fullName>
    </alternativeName>
</protein>
<reference key="1">
    <citation type="journal article" date="2011" name="Proc. Natl. Acad. Sci. U.S.A.">
        <title>Genomic anatomy of Escherichia coli O157:H7 outbreaks.</title>
        <authorList>
            <person name="Eppinger M."/>
            <person name="Mammel M.K."/>
            <person name="Leclerc J.E."/>
            <person name="Ravel J."/>
            <person name="Cebula T.A."/>
        </authorList>
    </citation>
    <scope>NUCLEOTIDE SEQUENCE [LARGE SCALE GENOMIC DNA]</scope>
    <source>
        <strain>EC4115 / EHEC</strain>
    </source>
</reference>
<accession>B5YY78</accession>
<proteinExistence type="inferred from homology"/>
<keyword id="KW-0028">Amino-acid biosynthesis</keyword>
<keyword id="KW-0479">Metal-binding</keyword>
<keyword id="KW-0486">Methionine biosynthesis</keyword>
<keyword id="KW-0489">Methyltransferase</keyword>
<keyword id="KW-0677">Repeat</keyword>
<keyword id="KW-0808">Transferase</keyword>
<keyword id="KW-0862">Zinc</keyword>
<name>METE_ECO5E</name>
<comment type="function">
    <text evidence="1">Catalyzes the transfer of a methyl group from 5-methyltetrahydrofolate to homocysteine resulting in methionine formation.</text>
</comment>
<comment type="catalytic activity">
    <reaction evidence="1">
        <text>5-methyltetrahydropteroyltri-L-glutamate + L-homocysteine = tetrahydropteroyltri-L-glutamate + L-methionine</text>
        <dbReference type="Rhea" id="RHEA:21196"/>
        <dbReference type="ChEBI" id="CHEBI:57844"/>
        <dbReference type="ChEBI" id="CHEBI:58140"/>
        <dbReference type="ChEBI" id="CHEBI:58199"/>
        <dbReference type="ChEBI" id="CHEBI:58207"/>
        <dbReference type="EC" id="2.1.1.14"/>
    </reaction>
</comment>
<comment type="cofactor">
    <cofactor evidence="1">
        <name>Zn(2+)</name>
        <dbReference type="ChEBI" id="CHEBI:29105"/>
    </cofactor>
    <text evidence="1">Binds 1 zinc ion per subunit.</text>
</comment>
<comment type="pathway">
    <text evidence="1">Amino-acid biosynthesis; L-methionine biosynthesis via de novo pathway; L-methionine from L-homocysteine (MetE route): step 1/1.</text>
</comment>
<comment type="similarity">
    <text evidence="1">Belongs to the vitamin-B12 independent methionine synthase family.</text>
</comment>
<gene>
    <name evidence="1" type="primary">metE</name>
    <name type="ordered locus">ECH74115_5270</name>
</gene>